<feature type="chain" id="PRO_0000446450" description="Deoxyribose-phosphate aldolase">
    <location>
        <begin position="1"/>
        <end position="222"/>
    </location>
</feature>
<feature type="active site" description="Proton donor/acceptor" evidence="1">
    <location>
        <position position="92"/>
    </location>
</feature>
<feature type="active site" description="Schiff-base intermediate with acetaldehyde" evidence="1">
    <location>
        <position position="156"/>
    </location>
</feature>
<feature type="active site" description="Proton donor/acceptor" evidence="1">
    <location>
        <position position="185"/>
    </location>
</feature>
<evidence type="ECO:0000255" key="1">
    <source>
        <dbReference type="HAMAP-Rule" id="MF_00114"/>
    </source>
</evidence>
<evidence type="ECO:0000269" key="2">
    <source ref="3"/>
</evidence>
<evidence type="ECO:0000303" key="3">
    <source ref="3"/>
</evidence>
<evidence type="ECO:0000312" key="4">
    <source>
        <dbReference type="EMBL" id="ADD07968.1"/>
    </source>
</evidence>
<evidence type="ECO:0000312" key="5">
    <source>
        <dbReference type="EMBL" id="EDY35261.1"/>
    </source>
</evidence>
<comment type="function">
    <text evidence="1 2">Catalyzes a reversible aldol reaction between acetaldehyde and D-glyceraldehyde 3-phosphate to generate 2-deoxy-D-ribose 5-phosphate.</text>
</comment>
<comment type="catalytic activity">
    <reaction evidence="1 2">
        <text>2-deoxy-D-ribose 5-phosphate = D-glyceraldehyde 3-phosphate + acetaldehyde</text>
        <dbReference type="Rhea" id="RHEA:12821"/>
        <dbReference type="ChEBI" id="CHEBI:15343"/>
        <dbReference type="ChEBI" id="CHEBI:59776"/>
        <dbReference type="ChEBI" id="CHEBI:62877"/>
        <dbReference type="EC" id="4.1.2.4"/>
    </reaction>
</comment>
<comment type="activity regulation">
    <text evidence="2">Shows high stability to high concentrations of acetaldehyde.</text>
</comment>
<comment type="biophysicochemical properties">
    <kinetics>
        <KM evidence="2">0.12 mM for 2-deoxy-D-ribose 5-phosphate</KM>
    </kinetics>
    <phDependence>
        <text evidence="2">Optimum pH is 7.0. Extremely stable over a wide range of pH levels.</text>
    </phDependence>
    <temperatureDependence>
        <text evidence="2">Optimum temperature is 80 degrees Celsius.</text>
    </temperatureDependence>
</comment>
<comment type="pathway">
    <text evidence="1">Carbohydrate degradation; 2-deoxy-D-ribose 1-phosphate degradation; D-glyceraldehyde 3-phosphate and acetaldehyde from 2-deoxy-alpha-D-ribose 1-phosphate: step 2/2.</text>
</comment>
<comment type="subunit">
    <text evidence="2">Homodimer.</text>
</comment>
<comment type="subcellular location">
    <subcellularLocation>
        <location evidence="1">Cytoplasm</location>
    </subcellularLocation>
</comment>
<comment type="similarity">
    <text evidence="1">Belongs to the DeoC/FbaB aldolase family. DeoC type 1 subfamily.</text>
</comment>
<dbReference type="EC" id="4.1.2.4" evidence="1 2"/>
<dbReference type="EMBL" id="DS990524">
    <property type="protein sequence ID" value="EDY35261.1"/>
    <property type="molecule type" value="Genomic_DNA"/>
</dbReference>
<dbReference type="EMBL" id="CP001941">
    <property type="protein sequence ID" value="ADD07968.1"/>
    <property type="molecule type" value="Genomic_DNA"/>
</dbReference>
<dbReference type="RefSeq" id="WP_008085134.1">
    <property type="nucleotide sequence ID" value="NC_013926.1"/>
</dbReference>
<dbReference type="SMR" id="B5IEU6"/>
<dbReference type="STRING" id="439481.Aboo_0156"/>
<dbReference type="GeneID" id="8827093"/>
<dbReference type="KEGG" id="abi:Aboo_0156"/>
<dbReference type="eggNOG" id="arCOG04320">
    <property type="taxonomic scope" value="Archaea"/>
</dbReference>
<dbReference type="HOGENOM" id="CLU_053595_0_2_2"/>
<dbReference type="OrthoDB" id="31145at2157"/>
<dbReference type="BRENDA" id="4.1.2.4">
    <property type="organism ID" value="13712"/>
</dbReference>
<dbReference type="UniPathway" id="UPA00002">
    <property type="reaction ID" value="UER00468"/>
</dbReference>
<dbReference type="Proteomes" id="UP000001400">
    <property type="component" value="Chromosome"/>
</dbReference>
<dbReference type="GO" id="GO:0005737">
    <property type="term" value="C:cytoplasm"/>
    <property type="evidence" value="ECO:0007669"/>
    <property type="project" value="UniProtKB-SubCell"/>
</dbReference>
<dbReference type="GO" id="GO:0004139">
    <property type="term" value="F:deoxyribose-phosphate aldolase activity"/>
    <property type="evidence" value="ECO:0007669"/>
    <property type="project" value="UniProtKB-UniRule"/>
</dbReference>
<dbReference type="GO" id="GO:0006018">
    <property type="term" value="P:2-deoxyribose 1-phosphate catabolic process"/>
    <property type="evidence" value="ECO:0007669"/>
    <property type="project" value="UniProtKB-UniRule"/>
</dbReference>
<dbReference type="GO" id="GO:0016052">
    <property type="term" value="P:carbohydrate catabolic process"/>
    <property type="evidence" value="ECO:0007669"/>
    <property type="project" value="TreeGrafter"/>
</dbReference>
<dbReference type="GO" id="GO:0009264">
    <property type="term" value="P:deoxyribonucleotide catabolic process"/>
    <property type="evidence" value="ECO:0007669"/>
    <property type="project" value="InterPro"/>
</dbReference>
<dbReference type="CDD" id="cd00959">
    <property type="entry name" value="DeoC"/>
    <property type="match status" value="1"/>
</dbReference>
<dbReference type="FunFam" id="3.20.20.70:FF:000044">
    <property type="entry name" value="Deoxyribose-phosphate aldolase"/>
    <property type="match status" value="1"/>
</dbReference>
<dbReference type="Gene3D" id="3.20.20.70">
    <property type="entry name" value="Aldolase class I"/>
    <property type="match status" value="1"/>
</dbReference>
<dbReference type="HAMAP" id="MF_00114">
    <property type="entry name" value="DeoC_type1"/>
    <property type="match status" value="1"/>
</dbReference>
<dbReference type="InterPro" id="IPR013785">
    <property type="entry name" value="Aldolase_TIM"/>
</dbReference>
<dbReference type="InterPro" id="IPR011343">
    <property type="entry name" value="DeoC"/>
</dbReference>
<dbReference type="InterPro" id="IPR002915">
    <property type="entry name" value="DeoC/FbaB/LacD_aldolase"/>
</dbReference>
<dbReference type="InterPro" id="IPR028581">
    <property type="entry name" value="DeoC_typeI"/>
</dbReference>
<dbReference type="NCBIfam" id="TIGR00126">
    <property type="entry name" value="deoC"/>
    <property type="match status" value="1"/>
</dbReference>
<dbReference type="PANTHER" id="PTHR10889">
    <property type="entry name" value="DEOXYRIBOSE-PHOSPHATE ALDOLASE"/>
    <property type="match status" value="1"/>
</dbReference>
<dbReference type="PANTHER" id="PTHR10889:SF1">
    <property type="entry name" value="DEOXYRIBOSE-PHOSPHATE ALDOLASE"/>
    <property type="match status" value="1"/>
</dbReference>
<dbReference type="Pfam" id="PF01791">
    <property type="entry name" value="DeoC"/>
    <property type="match status" value="1"/>
</dbReference>
<dbReference type="PIRSF" id="PIRSF001357">
    <property type="entry name" value="DeoC"/>
    <property type="match status" value="1"/>
</dbReference>
<dbReference type="SMART" id="SM01133">
    <property type="entry name" value="DeoC"/>
    <property type="match status" value="1"/>
</dbReference>
<dbReference type="SUPFAM" id="SSF51569">
    <property type="entry name" value="Aldolase"/>
    <property type="match status" value="1"/>
</dbReference>
<gene>
    <name evidence="1" type="primary">deoC</name>
    <name evidence="4" type="ordered locus">Aboo_0156</name>
    <name evidence="5" type="ORF">ABOONEI_332</name>
</gene>
<name>DEOC_ACIB4</name>
<accession>B5IEU6</accession>
<keyword id="KW-0963">Cytoplasm</keyword>
<keyword id="KW-0456">Lyase</keyword>
<keyword id="KW-1185">Reference proteome</keyword>
<keyword id="KW-0704">Schiff base</keyword>
<sequence>MDARELAKYIDHTNLKAFATREDIKRLCEEAKEYGFYAVCVNPYRVKDAAEFLKGTDIKIASVVGFPLGATFTETKVQEAIMAVRNGADEIDMVMNIGAMKDGDYGFVERDIREVVEAVHPMGAKVKVIIETCYLSDEEKIKACELAKKAGADFVKTSTGFGTAGAKVEDVKLMRSVVGNDMGVKAAGGIHNAKQAIAMIEAGATRIGASRSVEIIETLELI</sequence>
<reference key="1">
    <citation type="journal article" date="2008" name="Geobiology">
        <title>Electron microscopy encounters with unusual thermophiles helps direct genomic analysis of Aciduliprofundum boonei.</title>
        <authorList>
            <person name="Reysenbach A.L."/>
            <person name="Flores G.E."/>
        </authorList>
    </citation>
    <scope>NUCLEOTIDE SEQUENCE [LARGE SCALE GENOMIC DNA]</scope>
    <source>
        <strain>DSM 19572 / T469</strain>
    </source>
</reference>
<reference key="2">
    <citation type="submission" date="2010-02" db="EMBL/GenBank/DDBJ databases">
        <title>Complete sequence of Aciduliprofundum boonei T469.</title>
        <authorList>
            <person name="Lucas S."/>
            <person name="Copeland A."/>
            <person name="Lapidus A."/>
            <person name="Cheng J.-F."/>
            <person name="Bruce D."/>
            <person name="Goodwin L."/>
            <person name="Pitluck S."/>
            <person name="Saunders E."/>
            <person name="Detter J.C."/>
            <person name="Han C."/>
            <person name="Tapia R."/>
            <person name="Land M."/>
            <person name="Hauser L."/>
            <person name="Kyrpides N."/>
            <person name="Mikhailova N."/>
            <person name="Flores G."/>
            <person name="Reysenbach A.-L."/>
            <person name="Woyke T."/>
        </authorList>
    </citation>
    <scope>NUCLEOTIDE SEQUENCE [LARGE SCALE GENOMIC DNA]</scope>
    <source>
        <strain>DSM 19572 / T469</strain>
    </source>
</reference>
<reference key="3">
    <citation type="journal article" date="2011" name="Afr. J. Biotechnol.">
        <title>Cloning and characterization of a thermostable 2-deoxy-D-ribose-5-phosphate aldolase from Aciduliprofundum boonei.</title>
        <authorList>
            <person name="Yin X."/>
            <person name="Wang Q."/>
            <person name="Zhao S.J."/>
            <person name="Du P.F."/>
            <person name="Xie K.L."/>
            <person name="Jin P."/>
            <person name="Xie T."/>
        </authorList>
    </citation>
    <scope>FUNCTION</scope>
    <scope>CATALYTIC ACTIVITY</scope>
    <scope>ACTIVITY REGULATION</scope>
    <scope>BIOPHYSICOCHEMICAL PROPERTIES</scope>
    <scope>SUBUNIT</scope>
</reference>
<protein>
    <recommendedName>
        <fullName evidence="1">Deoxyribose-phosphate aldolase</fullName>
        <shortName evidence="1 3">DERA</shortName>
        <ecNumber evidence="1 2">4.1.2.4</ecNumber>
    </recommendedName>
    <alternativeName>
        <fullName evidence="1">2-deoxy-D-ribose 5-phosphate aldolase</fullName>
    </alternativeName>
    <alternativeName>
        <fullName evidence="1">Phosphodeoxyriboaldolase</fullName>
        <shortName evidence="1">Deoxyriboaldolase</shortName>
    </alternativeName>
</protein>
<proteinExistence type="evidence at protein level"/>
<organism>
    <name type="scientific">Aciduliprofundum boonei (strain DSM 19572 / T469)</name>
    <dbReference type="NCBI Taxonomy" id="439481"/>
    <lineage>
        <taxon>Archaea</taxon>
        <taxon>Methanobacteriati</taxon>
        <taxon>Thermoplasmatota</taxon>
        <taxon>DHVE2 group</taxon>
        <taxon>Candidatus Aciduliprofundum</taxon>
    </lineage>
</organism>